<accession>A6L898</accession>
<dbReference type="EMBL" id="CP000140">
    <property type="protein sequence ID" value="ABR41912.1"/>
    <property type="molecule type" value="Genomic_DNA"/>
</dbReference>
<dbReference type="RefSeq" id="WP_005855329.1">
    <property type="nucleotide sequence ID" value="NZ_LR215978.1"/>
</dbReference>
<dbReference type="SMR" id="A6L898"/>
<dbReference type="STRING" id="435591.BDI_0117"/>
<dbReference type="PaxDb" id="435591-BDI_0117"/>
<dbReference type="GeneID" id="93524260"/>
<dbReference type="KEGG" id="pdi:BDI_0117"/>
<dbReference type="eggNOG" id="COG1970">
    <property type="taxonomic scope" value="Bacteria"/>
</dbReference>
<dbReference type="HOGENOM" id="CLU_095787_0_0_10"/>
<dbReference type="BioCyc" id="PDIS435591:G1G5A-118-MONOMER"/>
<dbReference type="Proteomes" id="UP000000566">
    <property type="component" value="Chromosome"/>
</dbReference>
<dbReference type="GO" id="GO:0005886">
    <property type="term" value="C:plasma membrane"/>
    <property type="evidence" value="ECO:0007669"/>
    <property type="project" value="UniProtKB-SubCell"/>
</dbReference>
<dbReference type="GO" id="GO:0008381">
    <property type="term" value="F:mechanosensitive monoatomic ion channel activity"/>
    <property type="evidence" value="ECO:0007669"/>
    <property type="project" value="UniProtKB-UniRule"/>
</dbReference>
<dbReference type="FunFam" id="1.10.1200.120:FF:000001">
    <property type="entry name" value="Large-conductance mechanosensitive channel"/>
    <property type="match status" value="1"/>
</dbReference>
<dbReference type="Gene3D" id="1.10.1200.120">
    <property type="entry name" value="Large-conductance mechanosensitive channel, MscL, domain 1"/>
    <property type="match status" value="1"/>
</dbReference>
<dbReference type="HAMAP" id="MF_00115">
    <property type="entry name" value="MscL"/>
    <property type="match status" value="1"/>
</dbReference>
<dbReference type="InterPro" id="IPR019823">
    <property type="entry name" value="Mechanosensitive_channel_CS"/>
</dbReference>
<dbReference type="InterPro" id="IPR001185">
    <property type="entry name" value="MS_channel"/>
</dbReference>
<dbReference type="InterPro" id="IPR037673">
    <property type="entry name" value="MSC/AndL"/>
</dbReference>
<dbReference type="InterPro" id="IPR036019">
    <property type="entry name" value="MscL_channel"/>
</dbReference>
<dbReference type="NCBIfam" id="TIGR00220">
    <property type="entry name" value="mscL"/>
    <property type="match status" value="1"/>
</dbReference>
<dbReference type="NCBIfam" id="NF001843">
    <property type="entry name" value="PRK00567.1-4"/>
    <property type="match status" value="1"/>
</dbReference>
<dbReference type="NCBIfam" id="NF010557">
    <property type="entry name" value="PRK13952.1"/>
    <property type="match status" value="1"/>
</dbReference>
<dbReference type="PANTHER" id="PTHR30266:SF2">
    <property type="entry name" value="LARGE-CONDUCTANCE MECHANOSENSITIVE CHANNEL"/>
    <property type="match status" value="1"/>
</dbReference>
<dbReference type="PANTHER" id="PTHR30266">
    <property type="entry name" value="MECHANOSENSITIVE CHANNEL MSCL"/>
    <property type="match status" value="1"/>
</dbReference>
<dbReference type="Pfam" id="PF01741">
    <property type="entry name" value="MscL"/>
    <property type="match status" value="1"/>
</dbReference>
<dbReference type="PRINTS" id="PR01264">
    <property type="entry name" value="MECHCHANNEL"/>
</dbReference>
<dbReference type="SUPFAM" id="SSF81330">
    <property type="entry name" value="Gated mechanosensitive channel"/>
    <property type="match status" value="1"/>
</dbReference>
<dbReference type="PROSITE" id="PS01327">
    <property type="entry name" value="MSCL"/>
    <property type="match status" value="1"/>
</dbReference>
<proteinExistence type="inferred from homology"/>
<gene>
    <name evidence="1" type="primary">mscL</name>
    <name type="ordered locus">BDI_0117</name>
</gene>
<keyword id="KW-0997">Cell inner membrane</keyword>
<keyword id="KW-1003">Cell membrane</keyword>
<keyword id="KW-0407">Ion channel</keyword>
<keyword id="KW-0406">Ion transport</keyword>
<keyword id="KW-0472">Membrane</keyword>
<keyword id="KW-1185">Reference proteome</keyword>
<keyword id="KW-0812">Transmembrane</keyword>
<keyword id="KW-1133">Transmembrane helix</keyword>
<keyword id="KW-0813">Transport</keyword>
<name>MSCL_PARD8</name>
<comment type="function">
    <text evidence="1">Channel that opens in response to stretch forces in the membrane lipid bilayer. May participate in the regulation of osmotic pressure changes within the cell.</text>
</comment>
<comment type="subunit">
    <text evidence="1">Homopentamer.</text>
</comment>
<comment type="subcellular location">
    <subcellularLocation>
        <location evidence="1">Cell inner membrane</location>
        <topology evidence="1">Multi-pass membrane protein</topology>
    </subcellularLocation>
</comment>
<comment type="similarity">
    <text evidence="1">Belongs to the MscL family.</text>
</comment>
<feature type="chain" id="PRO_1000015404" description="Large-conductance mechanosensitive channel">
    <location>
        <begin position="1"/>
        <end position="140"/>
    </location>
</feature>
<feature type="transmembrane region" description="Helical" evidence="1">
    <location>
        <begin position="11"/>
        <end position="31"/>
    </location>
</feature>
<feature type="transmembrane region" description="Helical" evidence="1">
    <location>
        <begin position="82"/>
        <end position="102"/>
    </location>
</feature>
<evidence type="ECO:0000255" key="1">
    <source>
        <dbReference type="HAMAP-Rule" id="MF_00115"/>
    </source>
</evidence>
<reference key="1">
    <citation type="journal article" date="2007" name="PLoS Biol.">
        <title>Evolution of symbiotic bacteria in the distal human intestine.</title>
        <authorList>
            <person name="Xu J."/>
            <person name="Mahowald M.A."/>
            <person name="Ley R.E."/>
            <person name="Lozupone C.A."/>
            <person name="Hamady M."/>
            <person name="Martens E.C."/>
            <person name="Henrissat B."/>
            <person name="Coutinho P.M."/>
            <person name="Minx P."/>
            <person name="Latreille P."/>
            <person name="Cordum H."/>
            <person name="Van Brunt A."/>
            <person name="Kim K."/>
            <person name="Fulton R.S."/>
            <person name="Fulton L.A."/>
            <person name="Clifton S.W."/>
            <person name="Wilson R.K."/>
            <person name="Knight R.D."/>
            <person name="Gordon J.I."/>
        </authorList>
    </citation>
    <scope>NUCLEOTIDE SEQUENCE [LARGE SCALE GENOMIC DNA]</scope>
    <source>
        <strain>ATCC 8503 / DSM 20701 / CIP 104284 / JCM 5825 / NCTC 11152</strain>
    </source>
</reference>
<protein>
    <recommendedName>
        <fullName evidence="1">Large-conductance mechanosensitive channel</fullName>
    </recommendedName>
</protein>
<organism>
    <name type="scientific">Parabacteroides distasonis (strain ATCC 8503 / DSM 20701 / CIP 104284 / JCM 5825 / NCTC 11152)</name>
    <dbReference type="NCBI Taxonomy" id="435591"/>
    <lineage>
        <taxon>Bacteria</taxon>
        <taxon>Pseudomonadati</taxon>
        <taxon>Bacteroidota</taxon>
        <taxon>Bacteroidia</taxon>
        <taxon>Bacteroidales</taxon>
        <taxon>Tannerellaceae</taxon>
        <taxon>Parabacteroides</taxon>
    </lineage>
</organism>
<sequence>MKKILQEFKQFAMRGNVVDMAVGIIIGGAFGKIVSSIVADLIMPAVGLLVGGVNFTDLKITLKHAVMEGDKVISPAVSINYGNFIQVTLDFIIIAFAVFLLVKGVNALSKKKEEAPKAPVAPPADIQLLTEIRDLLKNNK</sequence>